<protein>
    <recommendedName>
        <fullName>Nodulation protein S</fullName>
        <ecNumber>2.1.1.-</ecNumber>
    </recommendedName>
</protein>
<proteinExistence type="inferred from homology"/>
<sequence length="216" mass="24170">MCKSLCRSVHGVSEANLTQVNNYHLLHRELAAEDPWRLDANAFEQERHSQMLRLSLSQGPITNALEVGCAAGAFTEKLAPYCKRLTVIDVVPRAIARTRQRMKESSHINWIVADVRQFSTQQLFDLIVVAEVLYYLEDVAAIRTAVHNLVSMLAPSGHMVFGSAIDANCRRWGHVAGAETVIAMLNETLIEVERLYCRGASVNEDCLLSRFQKSTT</sequence>
<name>NODS_SINFN</name>
<evidence type="ECO:0000305" key="1"/>
<geneLocation type="plasmid">
    <name>sym pNGR234a</name>
</geneLocation>
<dbReference type="EC" id="2.1.1.-"/>
<dbReference type="EMBL" id="J03686">
    <property type="protein sequence ID" value="AAA91578.1"/>
    <property type="molecule type" value="Genomic_DNA"/>
</dbReference>
<dbReference type="EMBL" id="U00090">
    <property type="protein sequence ID" value="AAB91783.1"/>
    <property type="molecule type" value="Genomic_DNA"/>
</dbReference>
<dbReference type="RefSeq" id="NP_443986.1">
    <property type="nucleotide sequence ID" value="NC_000914.2"/>
</dbReference>
<dbReference type="RefSeq" id="WP_010875264.1">
    <property type="nucleotide sequence ID" value="NC_000914.2"/>
</dbReference>
<dbReference type="SMR" id="P19441"/>
<dbReference type="KEGG" id="rhi:NGR_a02390"/>
<dbReference type="PATRIC" id="fig|394.7.peg.249"/>
<dbReference type="eggNOG" id="COG0500">
    <property type="taxonomic scope" value="Bacteria"/>
</dbReference>
<dbReference type="HOGENOM" id="CLU_1359492_0_0_5"/>
<dbReference type="OrthoDB" id="116799at2"/>
<dbReference type="Proteomes" id="UP000001054">
    <property type="component" value="Plasmid pNGR234a"/>
</dbReference>
<dbReference type="GO" id="GO:0008757">
    <property type="term" value="F:S-adenosylmethionine-dependent methyltransferase activity"/>
    <property type="evidence" value="ECO:0007669"/>
    <property type="project" value="InterPro"/>
</dbReference>
<dbReference type="GO" id="GO:0032259">
    <property type="term" value="P:methylation"/>
    <property type="evidence" value="ECO:0007669"/>
    <property type="project" value="UniProtKB-KW"/>
</dbReference>
<dbReference type="GO" id="GO:0009312">
    <property type="term" value="P:oligosaccharide biosynthetic process"/>
    <property type="evidence" value="ECO:0007669"/>
    <property type="project" value="InterPro"/>
</dbReference>
<dbReference type="CDD" id="cd02440">
    <property type="entry name" value="AdoMet_MTases"/>
    <property type="match status" value="1"/>
</dbReference>
<dbReference type="Gene3D" id="3.40.50.150">
    <property type="entry name" value="Vaccinia Virus protein VP39"/>
    <property type="match status" value="1"/>
</dbReference>
<dbReference type="InterPro" id="IPR020944">
    <property type="entry name" value="NodS"/>
</dbReference>
<dbReference type="InterPro" id="IPR029063">
    <property type="entry name" value="SAM-dependent_MTases_sf"/>
</dbReference>
<dbReference type="InterPro" id="IPR008715">
    <property type="entry name" value="SAM-MeTfrase_NodS-like"/>
</dbReference>
<dbReference type="NCBIfam" id="NF041650">
    <property type="entry name" value="nod_mtase_NodS"/>
    <property type="match status" value="1"/>
</dbReference>
<dbReference type="PANTHER" id="PTHR43464">
    <property type="entry name" value="METHYLTRANSFERASE"/>
    <property type="match status" value="1"/>
</dbReference>
<dbReference type="PANTHER" id="PTHR43464:SF49">
    <property type="entry name" value="TELLURITE METHYLTRANSFERASE"/>
    <property type="match status" value="1"/>
</dbReference>
<dbReference type="Pfam" id="PF05401">
    <property type="entry name" value="NodS"/>
    <property type="match status" value="1"/>
</dbReference>
<dbReference type="PIRSF" id="PIRSF009310">
    <property type="entry name" value="NodS"/>
    <property type="match status" value="1"/>
</dbReference>
<dbReference type="SUPFAM" id="SSF53335">
    <property type="entry name" value="S-adenosyl-L-methionine-dependent methyltransferases"/>
    <property type="match status" value="1"/>
</dbReference>
<gene>
    <name type="primary">nodS</name>
    <name type="ordered locus">NGR_a02390</name>
    <name type="ORF">y4nC</name>
</gene>
<keyword id="KW-0489">Methyltransferase</keyword>
<keyword id="KW-0536">Nodulation</keyword>
<keyword id="KW-0614">Plasmid</keyword>
<keyword id="KW-1185">Reference proteome</keyword>
<keyword id="KW-0808">Transferase</keyword>
<accession>P19441</accession>
<organism>
    <name type="scientific">Sinorhizobium fredii (strain NBRC 101917 / NGR234)</name>
    <dbReference type="NCBI Taxonomy" id="394"/>
    <lineage>
        <taxon>Bacteria</taxon>
        <taxon>Pseudomonadati</taxon>
        <taxon>Pseudomonadota</taxon>
        <taxon>Alphaproteobacteria</taxon>
        <taxon>Hyphomicrobiales</taxon>
        <taxon>Rhizobiaceae</taxon>
        <taxon>Sinorhizobium/Ensifer group</taxon>
        <taxon>Sinorhizobium</taxon>
    </lineage>
</organism>
<comment type="function">
    <text>SAM-utilizing methyltransferase involved in nod factor synthesis.</text>
</comment>
<comment type="similarity">
    <text evidence="1">Belongs to the NodS family.</text>
</comment>
<feature type="chain" id="PRO_0000096915" description="Nodulation protein S">
    <location>
        <begin position="1"/>
        <end position="216"/>
    </location>
</feature>
<reference key="1">
    <citation type="journal article" date="1990" name="Mol. Plant Microbe Interact.">
        <title>nodSU, two new nod genes of the broad host range Rhizobium strain NGR234 encode host-specific nodulation of the tropical tree Leucaena leucocephala.</title>
        <authorList>
            <person name="Lewin A."/>
            <person name="Cervantes E."/>
            <person name="Wong C.-H."/>
            <person name="Broughton W.J."/>
        </authorList>
    </citation>
    <scope>NUCLEOTIDE SEQUENCE [GENOMIC DNA]</scope>
</reference>
<reference key="2">
    <citation type="journal article" date="1997" name="Nature">
        <title>Molecular basis of symbiosis between Rhizobium and legumes.</title>
        <authorList>
            <person name="Freiberg C.A."/>
            <person name="Fellay R."/>
            <person name="Bairoch A."/>
            <person name="Broughton W.J."/>
            <person name="Rosenthal A."/>
            <person name="Perret X."/>
        </authorList>
    </citation>
    <scope>NUCLEOTIDE SEQUENCE [LARGE SCALE GENOMIC DNA]</scope>
    <source>
        <strain>NBRC 101917 / NGR234</strain>
    </source>
</reference>
<reference key="3">
    <citation type="journal article" date="2009" name="Appl. Environ. Microbiol.">
        <title>Rhizobium sp. strain NGR234 possesses a remarkable number of secretion systems.</title>
        <authorList>
            <person name="Schmeisser C."/>
            <person name="Liesegang H."/>
            <person name="Krysciak D."/>
            <person name="Bakkou N."/>
            <person name="Le Quere A."/>
            <person name="Wollherr A."/>
            <person name="Heinemeyer I."/>
            <person name="Morgenstern B."/>
            <person name="Pommerening-Roeser A."/>
            <person name="Flores M."/>
            <person name="Palacios R."/>
            <person name="Brenner S."/>
            <person name="Gottschalk G."/>
            <person name="Schmitz R.A."/>
            <person name="Broughton W.J."/>
            <person name="Perret X."/>
            <person name="Strittmatter A.W."/>
            <person name="Streit W.R."/>
        </authorList>
    </citation>
    <scope>NUCLEOTIDE SEQUENCE [LARGE SCALE GENOMIC DNA]</scope>
    <source>
        <strain>NBRC 101917 / NGR234</strain>
    </source>
</reference>